<name>TRAP_CALCV</name>
<accession>Q96703</accession>
<sequence length="129" mass="14634">MQNSSLLKPPSIKAQHKIAKRRAVRRRRIDLNCGCSIFLHINCADNGFTHRGEHHCSSGREFRFYLGGSKSPIFQDTTRRGPVVHQNQDLPHPSPVQPQPTESIGSPQSLLQLPSLDDFDESFWADIFK</sequence>
<evidence type="ECO:0000250" key="1"/>
<evidence type="ECO:0000256" key="2">
    <source>
        <dbReference type="SAM" id="MobiDB-lite"/>
    </source>
</evidence>
<evidence type="ECO:0000269" key="3">
    <source>
    </source>
</evidence>
<evidence type="ECO:0000305" key="4"/>
<protein>
    <recommendedName>
        <fullName>Transcriptional activator protein</fullName>
        <shortName>TrAP</shortName>
    </recommendedName>
    <alternativeName>
        <fullName>Protein AC2</fullName>
    </alternativeName>
    <alternativeName>
        <fullName>Protein AL2</fullName>
    </alternativeName>
</protein>
<keyword id="KW-0010">Activator</keyword>
<keyword id="KW-0238">DNA-binding</keyword>
<keyword id="KW-1035">Host cytoplasm</keyword>
<keyword id="KW-1048">Host nucleus</keyword>
<keyword id="KW-0945">Host-virus interaction</keyword>
<keyword id="KW-1090">Inhibition of host innate immune response by virus</keyword>
<keyword id="KW-0479">Metal-binding</keyword>
<keyword id="KW-0597">Phosphoprotein</keyword>
<keyword id="KW-0941">Suppressor of RNA silencing</keyword>
<keyword id="KW-0899">Viral immunoevasion</keyword>
<keyword id="KW-0862">Zinc</keyword>
<keyword id="KW-0863">Zinc-finger</keyword>
<dbReference type="EMBL" id="U65529">
    <property type="protein sequence ID" value="AAB17962.1"/>
    <property type="molecule type" value="Genomic_DNA"/>
</dbReference>
<dbReference type="DIP" id="DIP-62057N"/>
<dbReference type="IntAct" id="Q96703">
    <property type="interactions" value="5"/>
</dbReference>
<dbReference type="iPTMnet" id="Q96703"/>
<dbReference type="KEGG" id="vg:993359"/>
<dbReference type="Proteomes" id="UP000007622">
    <property type="component" value="Genome"/>
</dbReference>
<dbReference type="GO" id="GO:0030430">
    <property type="term" value="C:host cell cytoplasm"/>
    <property type="evidence" value="ECO:0007669"/>
    <property type="project" value="UniProtKB-SubCell"/>
</dbReference>
<dbReference type="GO" id="GO:0042025">
    <property type="term" value="C:host cell nucleus"/>
    <property type="evidence" value="ECO:0007669"/>
    <property type="project" value="UniProtKB-SubCell"/>
</dbReference>
<dbReference type="GO" id="GO:0019028">
    <property type="term" value="C:viral capsid"/>
    <property type="evidence" value="ECO:0007669"/>
    <property type="project" value="InterPro"/>
</dbReference>
<dbReference type="GO" id="GO:0003677">
    <property type="term" value="F:DNA binding"/>
    <property type="evidence" value="ECO:0007669"/>
    <property type="project" value="UniProtKB-KW"/>
</dbReference>
<dbReference type="GO" id="GO:0005198">
    <property type="term" value="F:structural molecule activity"/>
    <property type="evidence" value="ECO:0007669"/>
    <property type="project" value="InterPro"/>
</dbReference>
<dbReference type="GO" id="GO:0008270">
    <property type="term" value="F:zinc ion binding"/>
    <property type="evidence" value="ECO:0007669"/>
    <property type="project" value="UniProtKB-KW"/>
</dbReference>
<dbReference type="GO" id="GO:0052170">
    <property type="term" value="P:symbiont-mediated suppression of host innate immune response"/>
    <property type="evidence" value="ECO:0007669"/>
    <property type="project" value="UniProtKB-KW"/>
</dbReference>
<dbReference type="InterPro" id="IPR000942">
    <property type="entry name" value="Gemini_AL2"/>
</dbReference>
<dbReference type="Pfam" id="PF01440">
    <property type="entry name" value="Gemini_AL2"/>
    <property type="match status" value="1"/>
</dbReference>
<dbReference type="PRINTS" id="PR00230">
    <property type="entry name" value="GEMCOATAL2"/>
</dbReference>
<organism>
    <name type="scientific">Cabbage leaf curl virus (isolate Jamaica)</name>
    <name type="common">CaLCuV</name>
    <dbReference type="NCBI Taxonomy" id="345184"/>
    <lineage>
        <taxon>Viruses</taxon>
        <taxon>Monodnaviria</taxon>
        <taxon>Shotokuvirae</taxon>
        <taxon>Cressdnaviricota</taxon>
        <taxon>Repensiviricetes</taxon>
        <taxon>Geplafuvirales</taxon>
        <taxon>Geminiviridae</taxon>
        <taxon>Begomovirus</taxon>
    </lineage>
</organism>
<feature type="chain" id="PRO_0000323680" description="Transcriptional activator protein">
    <location>
        <begin position="1"/>
        <end position="129"/>
    </location>
</feature>
<feature type="zinc finger region" evidence="1">
    <location>
        <begin position="33"/>
        <end position="50"/>
    </location>
</feature>
<feature type="region of interest" description="Disordered" evidence="2">
    <location>
        <begin position="73"/>
        <end position="109"/>
    </location>
</feature>
<feature type="region of interest" description="Transactivation" evidence="1">
    <location>
        <begin position="115"/>
        <end position="129"/>
    </location>
</feature>
<feature type="short sequence motif" description="Nuclear localization signal" evidence="1">
    <location>
        <begin position="13"/>
        <end position="28"/>
    </location>
</feature>
<feature type="modified residue" description="Phosphoserine; by host" evidence="3">
    <location>
        <position position="109"/>
    </location>
</feature>
<feature type="mutagenesis site" description="Strongly reduces phosphorylation." evidence="3">
    <original>S</original>
    <variation>A</variation>
    <location>
        <position position="109"/>
    </location>
</feature>
<feature type="mutagenesis site" description="Favorises a delayed symptom development and viral DNA accumulation during infection in Arabidopsis." evidence="3">
    <original>S</original>
    <variation>D</variation>
    <location>
        <position position="109"/>
    </location>
</feature>
<feature type="mutagenesis site" description="Favorises an early viral DNA accumulation during infection in Arabidopsis." evidence="3">
    <original>S</original>
    <variation>G</variation>
    <location>
        <position position="109"/>
    </location>
</feature>
<organismHost>
    <name type="scientific">Brassica oleracea</name>
    <name type="common">Wild cabbage</name>
    <dbReference type="NCBI Taxonomy" id="3712"/>
</organismHost>
<proteinExistence type="evidence at protein level"/>
<gene>
    <name type="ORF">AC2</name>
    <name type="ORF">AL2</name>
</gene>
<comment type="function">
    <text evidence="1">Strong activator of the late viral genes promoters. Enhances the expression of the capsid protein and nuclear shuttle protein. Acts as a suppressor of RNA-mediated gene silencing, also known as post-transcriptional gene silencing (PTGS), a mechanism of plant viral defense that limits the accumulation of viral RNAs. Suppresses the host RNA silencing by inhibiting adenosine kinase 2 (ADK2), a kinase involved in a general methylation pathway. Also suppresses the host basal defense by interacting with and inhibiting SNF1 kinase, a key regulator of cell metabolism implicated in innate antiviral defense. Determines pathogenicity (By similarity).</text>
</comment>
<comment type="subunit">
    <text evidence="1">Monomer. Homodimer. Homooligomer. Self-interaction correlates with nuclear localization and efficient activation of transcription. Monomers suppress local silencing by interacting with and inactivating host adenosine kinase 2 (ADK2) in the cytoplasm. Interacts with and inhibits host SNF1 kinase. Binds to ssDNA (By similarity).</text>
</comment>
<comment type="interaction">
    <interactant intactId="EBI-16175606">
        <id>Q96703</id>
    </interactant>
    <interactant intactId="EBI-16175508">
        <id>P03562</id>
        <label>AL2</label>
    </interactant>
    <organismsDiffer>true</organismsDiffer>
    <experiments>2</experiments>
</comment>
<comment type="interaction">
    <interactant intactId="EBI-16175606">
        <id>Q96703</id>
    </interactant>
    <interactant intactId="EBI-16175525">
        <id>Q8GZB6</id>
        <label>SUVH4</label>
    </interactant>
    <organismsDiffer>true</organismsDiffer>
    <experiments>2</experiments>
</comment>
<comment type="subcellular location">
    <subcellularLocation>
        <location evidence="1">Host nucleus</location>
    </subcellularLocation>
    <subcellularLocation>
        <location evidence="1">Host cytoplasm</location>
    </subcellularLocation>
    <text evidence="1">The phosphorylated form appears to accumulate almost exclusively in the nucleus, whereas the non-phosphorylated form is found in both nucleus and cytoplasm.</text>
</comment>
<comment type="domain">
    <text evidence="1">The zinc finger and the transactivation region are involved in PTGS suppression.</text>
</comment>
<comment type="PTM">
    <text evidence="3">Phosphorylated at Ser-109 by A.thaliana KIN10.</text>
</comment>
<comment type="similarity">
    <text evidence="4">Belongs to the geminiviridae transcriptional activator protein family.</text>
</comment>
<reference key="1">
    <citation type="journal article" date="1992" name="Phytopathology">
        <title>Cloning, identification and partial sequencing of a new geminivirus infecting Brassicaceae.</title>
        <authorList>
            <person name="Abouzid A.M."/>
            <person name="Hiebert E."/>
            <person name="Strandberg J.O."/>
        </authorList>
    </citation>
    <scope>NUCLEOTIDE SEQUENCE [GENOMIC DNA]</scope>
</reference>
<reference key="2">
    <citation type="journal article" date="2014" name="J. Virol.">
        <title>SnRK1 phosphorylation of AL2 delays Cabbage leaf curl virus infection in Arabidopsis.</title>
        <authorList>
            <person name="Shen W."/>
            <person name="Dallas M.B."/>
            <person name="Goshe M.B."/>
            <person name="Hanley-Bowdoin L."/>
        </authorList>
    </citation>
    <scope>PHOSPHORYLATION AT SER-109</scope>
    <scope>MUTAGENESIS OF SER-109</scope>
</reference>